<comment type="function">
    <text evidence="2">Transaldolase is important for the balance of metabolites in the pentose-phosphate pathway.</text>
</comment>
<comment type="catalytic activity">
    <reaction evidence="2">
        <text>D-sedoheptulose 7-phosphate + D-glyceraldehyde 3-phosphate = D-erythrose 4-phosphate + beta-D-fructose 6-phosphate</text>
        <dbReference type="Rhea" id="RHEA:17053"/>
        <dbReference type="ChEBI" id="CHEBI:16897"/>
        <dbReference type="ChEBI" id="CHEBI:57483"/>
        <dbReference type="ChEBI" id="CHEBI:57634"/>
        <dbReference type="ChEBI" id="CHEBI:59776"/>
        <dbReference type="EC" id="2.2.1.2"/>
    </reaction>
</comment>
<comment type="pathway">
    <text evidence="2">Carbohydrate degradation; pentose phosphate pathway; D-glyceraldehyde 3-phosphate and beta-D-fructose 6-phosphate from D-ribose 5-phosphate and D-xylulose 5-phosphate (non-oxidative stage): step 2/3.</text>
</comment>
<comment type="subunit">
    <text evidence="1">Homodimer.</text>
</comment>
<comment type="subcellular location">
    <subcellularLocation>
        <location evidence="2">Cytoplasm</location>
    </subcellularLocation>
</comment>
<comment type="similarity">
    <text evidence="2">Belongs to the transaldolase family. Type 1 subfamily.</text>
</comment>
<keyword id="KW-0963">Cytoplasm</keyword>
<keyword id="KW-0570">Pentose shunt</keyword>
<keyword id="KW-0704">Schiff base</keyword>
<keyword id="KW-0808">Transferase</keyword>
<reference key="1">
    <citation type="journal article" date="2008" name="ISME J.">
        <title>Comparative genomics of two ecotypes of the marine planktonic copiotroph Alteromonas macleodii suggests alternative lifestyles associated with different kinds of particulate organic matter.</title>
        <authorList>
            <person name="Ivars-Martinez E."/>
            <person name="Martin-Cuadrado A.-B."/>
            <person name="D'Auria G."/>
            <person name="Mira A."/>
            <person name="Ferriera S."/>
            <person name="Johnson J."/>
            <person name="Friedman R."/>
            <person name="Rodriguez-Valera F."/>
        </authorList>
    </citation>
    <scope>NUCLEOTIDE SEQUENCE [LARGE SCALE GENOMIC DNA]</scope>
    <source>
        <strain>DSM 17117 / CIP 110805 / LMG 28347 / Deep ecotype</strain>
    </source>
</reference>
<accession>B4RX40</accession>
<accession>F2GD86</accession>
<organism>
    <name type="scientific">Alteromonas mediterranea (strain DSM 17117 / CIP 110805 / LMG 28347 / Deep ecotype)</name>
    <dbReference type="NCBI Taxonomy" id="1774373"/>
    <lineage>
        <taxon>Bacteria</taxon>
        <taxon>Pseudomonadati</taxon>
        <taxon>Pseudomonadota</taxon>
        <taxon>Gammaproteobacteria</taxon>
        <taxon>Alteromonadales</taxon>
        <taxon>Alteromonadaceae</taxon>
        <taxon>Alteromonas/Salinimonas group</taxon>
        <taxon>Alteromonas</taxon>
    </lineage>
</organism>
<protein>
    <recommendedName>
        <fullName evidence="2">Transaldolase</fullName>
        <ecNumber evidence="2">2.2.1.2</ecNumber>
    </recommendedName>
</protein>
<gene>
    <name evidence="2" type="primary">tal</name>
    <name type="ordered locus">MADE_1015450</name>
</gene>
<name>TAL_ALTMD</name>
<evidence type="ECO:0000250" key="1"/>
<evidence type="ECO:0000255" key="2">
    <source>
        <dbReference type="HAMAP-Rule" id="MF_00492"/>
    </source>
</evidence>
<feature type="chain" id="PRO_1000126235" description="Transaldolase">
    <location>
        <begin position="1"/>
        <end position="319"/>
    </location>
</feature>
<feature type="active site" description="Schiff-base intermediate with substrate" evidence="2">
    <location>
        <position position="132"/>
    </location>
</feature>
<dbReference type="EC" id="2.2.1.2" evidence="2"/>
<dbReference type="EMBL" id="CP001103">
    <property type="protein sequence ID" value="AEA99222.1"/>
    <property type="molecule type" value="Genomic_DNA"/>
</dbReference>
<dbReference type="RefSeq" id="WP_012519514.1">
    <property type="nucleotide sequence ID" value="NC_011138.3"/>
</dbReference>
<dbReference type="SMR" id="B4RX40"/>
<dbReference type="KEGG" id="amc:MADE_1015450"/>
<dbReference type="HOGENOM" id="CLU_047470_0_1_6"/>
<dbReference type="UniPathway" id="UPA00115">
    <property type="reaction ID" value="UER00414"/>
</dbReference>
<dbReference type="Proteomes" id="UP000001870">
    <property type="component" value="Chromosome"/>
</dbReference>
<dbReference type="GO" id="GO:0005829">
    <property type="term" value="C:cytosol"/>
    <property type="evidence" value="ECO:0007669"/>
    <property type="project" value="TreeGrafter"/>
</dbReference>
<dbReference type="GO" id="GO:0004801">
    <property type="term" value="F:transaldolase activity"/>
    <property type="evidence" value="ECO:0000250"/>
    <property type="project" value="UniProtKB"/>
</dbReference>
<dbReference type="GO" id="GO:0005975">
    <property type="term" value="P:carbohydrate metabolic process"/>
    <property type="evidence" value="ECO:0007669"/>
    <property type="project" value="InterPro"/>
</dbReference>
<dbReference type="GO" id="GO:0006098">
    <property type="term" value="P:pentose-phosphate shunt"/>
    <property type="evidence" value="ECO:0007669"/>
    <property type="project" value="UniProtKB-UniRule"/>
</dbReference>
<dbReference type="CDD" id="cd00957">
    <property type="entry name" value="Transaldolase_TalAB"/>
    <property type="match status" value="1"/>
</dbReference>
<dbReference type="FunFam" id="3.20.20.70:FF:000002">
    <property type="entry name" value="Transaldolase"/>
    <property type="match status" value="1"/>
</dbReference>
<dbReference type="Gene3D" id="3.20.20.70">
    <property type="entry name" value="Aldolase class I"/>
    <property type="match status" value="1"/>
</dbReference>
<dbReference type="HAMAP" id="MF_00492">
    <property type="entry name" value="Transaldolase_1"/>
    <property type="match status" value="1"/>
</dbReference>
<dbReference type="InterPro" id="IPR013785">
    <property type="entry name" value="Aldolase_TIM"/>
</dbReference>
<dbReference type="InterPro" id="IPR001585">
    <property type="entry name" value="TAL/FSA"/>
</dbReference>
<dbReference type="InterPro" id="IPR004730">
    <property type="entry name" value="Transaldolase_1"/>
</dbReference>
<dbReference type="InterPro" id="IPR018225">
    <property type="entry name" value="Transaldolase_AS"/>
</dbReference>
<dbReference type="NCBIfam" id="NF009001">
    <property type="entry name" value="PRK12346.1"/>
    <property type="match status" value="1"/>
</dbReference>
<dbReference type="NCBIfam" id="TIGR00874">
    <property type="entry name" value="talAB"/>
    <property type="match status" value="1"/>
</dbReference>
<dbReference type="PANTHER" id="PTHR10683">
    <property type="entry name" value="TRANSALDOLASE"/>
    <property type="match status" value="1"/>
</dbReference>
<dbReference type="PANTHER" id="PTHR10683:SF18">
    <property type="entry name" value="TRANSALDOLASE"/>
    <property type="match status" value="1"/>
</dbReference>
<dbReference type="Pfam" id="PF00923">
    <property type="entry name" value="TAL_FSA"/>
    <property type="match status" value="1"/>
</dbReference>
<dbReference type="SUPFAM" id="SSF51569">
    <property type="entry name" value="Aldolase"/>
    <property type="match status" value="1"/>
</dbReference>
<dbReference type="PROSITE" id="PS01054">
    <property type="entry name" value="TRANSALDOLASE_1"/>
    <property type="match status" value="1"/>
</dbReference>
<dbReference type="PROSITE" id="PS00958">
    <property type="entry name" value="TRANSALDOLASE_2"/>
    <property type="match status" value="1"/>
</dbReference>
<proteinExistence type="inferred from homology"/>
<sequence>MSNQLASLRDITTVVADTGDIDAIKKYQPVDATTNPSLLLKAAGLPQYASLIDDAVAWAKLQSNDAEQQLTDASDKLAVAIGKEISGTIPGRISTEVDARLSFDTAATIEKAERLVQLYEDAGIDKSRILIKIASTWEGIQAAEALEKKGIQCNLTLLFSFAQAQACAEAGVYLISPFVGRILDWYKKATGTESYAPDEDPGVVSVTKIYNYYKEHGYKTVVMGASFRNIGEIQALAGCDRLTISPALLEELANEPGDLEVKLKDNDATKTPGERLTESEFRWAMNEDAMATEKLSEGIRNFAADQEKLEATLREKLSA</sequence>